<protein>
    <recommendedName>
        <fullName evidence="1">Large ribosomal subunit protein uL2</fullName>
    </recommendedName>
    <alternativeName>
        <fullName evidence="3">50S ribosomal protein L2</fullName>
    </alternativeName>
</protein>
<dbReference type="EMBL" id="CR767821">
    <property type="protein sequence ID" value="CAH58336.1"/>
    <property type="molecule type" value="Genomic_DNA"/>
</dbReference>
<dbReference type="EMBL" id="CR925678">
    <property type="protein sequence ID" value="CAI27129.1"/>
    <property type="molecule type" value="Genomic_DNA"/>
</dbReference>
<dbReference type="RefSeq" id="WP_011155286.1">
    <property type="nucleotide sequence ID" value="NC_005295.2"/>
</dbReference>
<dbReference type="SMR" id="Q5HAS5"/>
<dbReference type="GeneID" id="33058373"/>
<dbReference type="KEGG" id="eru:Erum6040"/>
<dbReference type="KEGG" id="erw:ERWE_CDS_06350"/>
<dbReference type="eggNOG" id="COG0090">
    <property type="taxonomic scope" value="Bacteria"/>
</dbReference>
<dbReference type="HOGENOM" id="CLU_036235_2_1_5"/>
<dbReference type="Proteomes" id="UP000001021">
    <property type="component" value="Chromosome"/>
</dbReference>
<dbReference type="GO" id="GO:0015934">
    <property type="term" value="C:large ribosomal subunit"/>
    <property type="evidence" value="ECO:0007669"/>
    <property type="project" value="InterPro"/>
</dbReference>
<dbReference type="GO" id="GO:0019843">
    <property type="term" value="F:rRNA binding"/>
    <property type="evidence" value="ECO:0007669"/>
    <property type="project" value="UniProtKB-UniRule"/>
</dbReference>
<dbReference type="GO" id="GO:0003735">
    <property type="term" value="F:structural constituent of ribosome"/>
    <property type="evidence" value="ECO:0007669"/>
    <property type="project" value="InterPro"/>
</dbReference>
<dbReference type="GO" id="GO:0016740">
    <property type="term" value="F:transferase activity"/>
    <property type="evidence" value="ECO:0007669"/>
    <property type="project" value="InterPro"/>
</dbReference>
<dbReference type="GO" id="GO:0002181">
    <property type="term" value="P:cytoplasmic translation"/>
    <property type="evidence" value="ECO:0007669"/>
    <property type="project" value="TreeGrafter"/>
</dbReference>
<dbReference type="FunFam" id="2.30.30.30:FF:000001">
    <property type="entry name" value="50S ribosomal protein L2"/>
    <property type="match status" value="1"/>
</dbReference>
<dbReference type="FunFam" id="2.40.50.140:FF:000003">
    <property type="entry name" value="50S ribosomal protein L2"/>
    <property type="match status" value="1"/>
</dbReference>
<dbReference type="FunFam" id="4.10.950.10:FF:000001">
    <property type="entry name" value="50S ribosomal protein L2"/>
    <property type="match status" value="1"/>
</dbReference>
<dbReference type="Gene3D" id="2.30.30.30">
    <property type="match status" value="1"/>
</dbReference>
<dbReference type="Gene3D" id="2.40.50.140">
    <property type="entry name" value="Nucleic acid-binding proteins"/>
    <property type="match status" value="1"/>
</dbReference>
<dbReference type="Gene3D" id="4.10.950.10">
    <property type="entry name" value="Ribosomal protein L2, domain 3"/>
    <property type="match status" value="1"/>
</dbReference>
<dbReference type="HAMAP" id="MF_01320_B">
    <property type="entry name" value="Ribosomal_uL2_B"/>
    <property type="match status" value="1"/>
</dbReference>
<dbReference type="InterPro" id="IPR012340">
    <property type="entry name" value="NA-bd_OB-fold"/>
</dbReference>
<dbReference type="InterPro" id="IPR014722">
    <property type="entry name" value="Rib_uL2_dom2"/>
</dbReference>
<dbReference type="InterPro" id="IPR002171">
    <property type="entry name" value="Ribosomal_uL2"/>
</dbReference>
<dbReference type="InterPro" id="IPR005880">
    <property type="entry name" value="Ribosomal_uL2_bac/org-type"/>
</dbReference>
<dbReference type="InterPro" id="IPR022669">
    <property type="entry name" value="Ribosomal_uL2_C"/>
</dbReference>
<dbReference type="InterPro" id="IPR022671">
    <property type="entry name" value="Ribosomal_uL2_CS"/>
</dbReference>
<dbReference type="InterPro" id="IPR014726">
    <property type="entry name" value="Ribosomal_uL2_dom3"/>
</dbReference>
<dbReference type="InterPro" id="IPR022666">
    <property type="entry name" value="Ribosomal_uL2_RNA-bd_dom"/>
</dbReference>
<dbReference type="InterPro" id="IPR008991">
    <property type="entry name" value="Translation_prot_SH3-like_sf"/>
</dbReference>
<dbReference type="NCBIfam" id="TIGR01171">
    <property type="entry name" value="rplB_bact"/>
    <property type="match status" value="1"/>
</dbReference>
<dbReference type="PANTHER" id="PTHR13691:SF5">
    <property type="entry name" value="LARGE RIBOSOMAL SUBUNIT PROTEIN UL2M"/>
    <property type="match status" value="1"/>
</dbReference>
<dbReference type="PANTHER" id="PTHR13691">
    <property type="entry name" value="RIBOSOMAL PROTEIN L2"/>
    <property type="match status" value="1"/>
</dbReference>
<dbReference type="Pfam" id="PF00181">
    <property type="entry name" value="Ribosomal_L2"/>
    <property type="match status" value="1"/>
</dbReference>
<dbReference type="Pfam" id="PF03947">
    <property type="entry name" value="Ribosomal_L2_C"/>
    <property type="match status" value="1"/>
</dbReference>
<dbReference type="PIRSF" id="PIRSF002158">
    <property type="entry name" value="Ribosomal_L2"/>
    <property type="match status" value="1"/>
</dbReference>
<dbReference type="SMART" id="SM01383">
    <property type="entry name" value="Ribosomal_L2"/>
    <property type="match status" value="1"/>
</dbReference>
<dbReference type="SMART" id="SM01382">
    <property type="entry name" value="Ribosomal_L2_C"/>
    <property type="match status" value="1"/>
</dbReference>
<dbReference type="SUPFAM" id="SSF50249">
    <property type="entry name" value="Nucleic acid-binding proteins"/>
    <property type="match status" value="1"/>
</dbReference>
<dbReference type="SUPFAM" id="SSF50104">
    <property type="entry name" value="Translation proteins SH3-like domain"/>
    <property type="match status" value="1"/>
</dbReference>
<dbReference type="PROSITE" id="PS00467">
    <property type="entry name" value="RIBOSOMAL_L2"/>
    <property type="match status" value="1"/>
</dbReference>
<gene>
    <name evidence="1" type="primary">rplB</name>
    <name type="ordered locus">Erum6040</name>
    <name type="ordered locus">ERWE_CDS_06350</name>
</gene>
<sequence>MGIKNLNSVTPSLRGTVLLDKSTLWKGRPEKSLVGYKISHGGRNSRGVITVRHRGKGHKRLYRIIDFKRKKVGVPATVERLEYDPNRTAFIALLSYDDGEKSYIIAPHGLKKGDVIMSGNGSDILPGNCLMLKLIPVGTFVHNVELRPGGGGIIARSAGTYAQLMSKDGIYVLLRLSSGEIRKVLADCCATIGIVSNLDNQNVKLGKAGRSRWLGIRPTVRGVAMNPIDHPHGGGEGKTSGGRNPVTPWGVSTKGKKTRKKNKSSNKYIKRVSDKG</sequence>
<reference key="1">
    <citation type="journal article" date="2005" name="Proc. Natl. Acad. Sci. U.S.A.">
        <title>The genome of the heartwater agent Ehrlichia ruminantium contains multiple tandem repeats of actively variable copy number.</title>
        <authorList>
            <person name="Collins N.E."/>
            <person name="Liebenberg J."/>
            <person name="de Villiers E.P."/>
            <person name="Brayton K.A."/>
            <person name="Louw E."/>
            <person name="Pretorius A."/>
            <person name="Faber F.E."/>
            <person name="van Heerden H."/>
            <person name="Josemans A."/>
            <person name="van Kleef M."/>
            <person name="Steyn H.C."/>
            <person name="van Strijp M.F."/>
            <person name="Zweygarth E."/>
            <person name="Jongejan F."/>
            <person name="Maillard J.C."/>
            <person name="Berthier D."/>
            <person name="Botha M."/>
            <person name="Joubert F."/>
            <person name="Corton C.H."/>
            <person name="Thomson N.R."/>
            <person name="Allsopp M.T."/>
            <person name="Allsopp B.A."/>
        </authorList>
    </citation>
    <scope>NUCLEOTIDE SEQUENCE [LARGE SCALE GENOMIC DNA]</scope>
    <source>
        <strain>Welgevonden</strain>
    </source>
</reference>
<reference key="2">
    <citation type="journal article" date="2006" name="J. Bacteriol.">
        <title>Comparative genomic analysis of three strains of Ehrlichia ruminantium reveals an active process of genome size plasticity.</title>
        <authorList>
            <person name="Frutos R."/>
            <person name="Viari A."/>
            <person name="Ferraz C."/>
            <person name="Morgat A."/>
            <person name="Eychenie S."/>
            <person name="Kandassamy Y."/>
            <person name="Chantal I."/>
            <person name="Bensaid A."/>
            <person name="Coissac E."/>
            <person name="Vachiery N."/>
            <person name="Demaille J."/>
            <person name="Martinez D."/>
        </authorList>
    </citation>
    <scope>NUCLEOTIDE SEQUENCE [LARGE SCALE GENOMIC DNA]</scope>
    <source>
        <strain>Welgevonden</strain>
    </source>
</reference>
<accession>Q5HAS5</accession>
<accession>Q5FD61</accession>
<comment type="function">
    <text evidence="1">One of the primary rRNA binding proteins. Required for association of the 30S and 50S subunits to form the 70S ribosome, for tRNA binding and peptide bond formation. It has been suggested to have peptidyltransferase activity; this is somewhat controversial. Makes several contacts with the 16S rRNA in the 70S ribosome.</text>
</comment>
<comment type="subunit">
    <text evidence="1">Part of the 50S ribosomal subunit. Forms a bridge to the 30S subunit in the 70S ribosome.</text>
</comment>
<comment type="similarity">
    <text evidence="1">Belongs to the universal ribosomal protein uL2 family.</text>
</comment>
<organism>
    <name type="scientific">Ehrlichia ruminantium (strain Welgevonden)</name>
    <dbReference type="NCBI Taxonomy" id="254945"/>
    <lineage>
        <taxon>Bacteria</taxon>
        <taxon>Pseudomonadati</taxon>
        <taxon>Pseudomonadota</taxon>
        <taxon>Alphaproteobacteria</taxon>
        <taxon>Rickettsiales</taxon>
        <taxon>Anaplasmataceae</taxon>
        <taxon>Ehrlichia</taxon>
    </lineage>
</organism>
<name>RL2_EHRRW</name>
<feature type="chain" id="PRO_0000237185" description="Large ribosomal subunit protein uL2">
    <location>
        <begin position="1"/>
        <end position="276"/>
    </location>
</feature>
<feature type="region of interest" description="Disordered" evidence="2">
    <location>
        <begin position="224"/>
        <end position="276"/>
    </location>
</feature>
<feature type="compositionally biased region" description="Basic residues" evidence="2">
    <location>
        <begin position="254"/>
        <end position="270"/>
    </location>
</feature>
<proteinExistence type="inferred from homology"/>
<keyword id="KW-0687">Ribonucleoprotein</keyword>
<keyword id="KW-0689">Ribosomal protein</keyword>
<keyword id="KW-0694">RNA-binding</keyword>
<keyword id="KW-0699">rRNA-binding</keyword>
<evidence type="ECO:0000255" key="1">
    <source>
        <dbReference type="HAMAP-Rule" id="MF_01320"/>
    </source>
</evidence>
<evidence type="ECO:0000256" key="2">
    <source>
        <dbReference type="SAM" id="MobiDB-lite"/>
    </source>
</evidence>
<evidence type="ECO:0000305" key="3"/>